<evidence type="ECO:0000255" key="1">
    <source>
        <dbReference type="HAMAP-Rule" id="MF_00366"/>
    </source>
</evidence>
<comment type="function">
    <text evidence="1">Promotes RNA polymerase assembly. Latches the N- and C-terminal regions of the beta' subunit thereby facilitating its interaction with the beta and alpha subunits.</text>
</comment>
<comment type="catalytic activity">
    <reaction evidence="1">
        <text>RNA(n) + a ribonucleoside 5'-triphosphate = RNA(n+1) + diphosphate</text>
        <dbReference type="Rhea" id="RHEA:21248"/>
        <dbReference type="Rhea" id="RHEA-COMP:14527"/>
        <dbReference type="Rhea" id="RHEA-COMP:17342"/>
        <dbReference type="ChEBI" id="CHEBI:33019"/>
        <dbReference type="ChEBI" id="CHEBI:61557"/>
        <dbReference type="ChEBI" id="CHEBI:140395"/>
        <dbReference type="EC" id="2.7.7.6"/>
    </reaction>
</comment>
<comment type="subunit">
    <text evidence="1">The RNAP catalytic core consists of 2 alpha, 1 beta, 1 beta' and 1 omega subunit. When a sigma factor is associated with the core the holoenzyme is formed, which can initiate transcription.</text>
</comment>
<comment type="similarity">
    <text evidence="1">Belongs to the RNA polymerase subunit omega family.</text>
</comment>
<gene>
    <name evidence="1" type="primary">rpoZ</name>
    <name type="ordered locus">LHK_00457</name>
</gene>
<reference key="1">
    <citation type="journal article" date="2009" name="PLoS Genet.">
        <title>The complete genome and proteome of Laribacter hongkongensis reveal potential mechanisms for adaptations to different temperatures and habitats.</title>
        <authorList>
            <person name="Woo P.C.Y."/>
            <person name="Lau S.K.P."/>
            <person name="Tse H."/>
            <person name="Teng J.L.L."/>
            <person name="Curreem S.O."/>
            <person name="Tsang A.K.L."/>
            <person name="Fan R.Y.Y."/>
            <person name="Wong G.K.M."/>
            <person name="Huang Y."/>
            <person name="Loman N.J."/>
            <person name="Snyder L.A.S."/>
            <person name="Cai J.J."/>
            <person name="Huang J.-D."/>
            <person name="Mak W."/>
            <person name="Pallen M.J."/>
            <person name="Lok S."/>
            <person name="Yuen K.-Y."/>
        </authorList>
    </citation>
    <scope>NUCLEOTIDE SEQUENCE [LARGE SCALE GENOMIC DNA]</scope>
    <source>
        <strain>HLHK9</strain>
    </source>
</reference>
<organism>
    <name type="scientific">Laribacter hongkongensis (strain HLHK9)</name>
    <dbReference type="NCBI Taxonomy" id="557598"/>
    <lineage>
        <taxon>Bacteria</taxon>
        <taxon>Pseudomonadati</taxon>
        <taxon>Pseudomonadota</taxon>
        <taxon>Betaproteobacteria</taxon>
        <taxon>Neisseriales</taxon>
        <taxon>Aquaspirillaceae</taxon>
        <taxon>Laribacter</taxon>
    </lineage>
</organism>
<protein>
    <recommendedName>
        <fullName evidence="1">DNA-directed RNA polymerase subunit omega</fullName>
        <shortName evidence="1">RNAP omega subunit</shortName>
        <ecNumber evidence="1">2.7.7.6</ecNumber>
    </recommendedName>
    <alternativeName>
        <fullName evidence="1">RNA polymerase omega subunit</fullName>
    </alternativeName>
    <alternativeName>
        <fullName evidence="1">Transcriptase subunit omega</fullName>
    </alternativeName>
</protein>
<accession>C1DC35</accession>
<keyword id="KW-0240">DNA-directed RNA polymerase</keyword>
<keyword id="KW-0548">Nucleotidyltransferase</keyword>
<keyword id="KW-1185">Reference proteome</keyword>
<keyword id="KW-0804">Transcription</keyword>
<keyword id="KW-0808">Transferase</keyword>
<proteinExistence type="inferred from homology"/>
<name>RPOZ_LARHH</name>
<sequence length="72" mass="7863">MARITVDDCLKRIPNRFDLTLAAAYRARQIANGAQLLIDSNAGSKDKPTVVALREIAAGQIGREVLERAIRS</sequence>
<feature type="chain" id="PRO_1000194798" description="DNA-directed RNA polymerase subunit omega">
    <location>
        <begin position="1"/>
        <end position="72"/>
    </location>
</feature>
<dbReference type="EC" id="2.7.7.6" evidence="1"/>
<dbReference type="EMBL" id="CP001154">
    <property type="protein sequence ID" value="ACO73452.1"/>
    <property type="molecule type" value="Genomic_DNA"/>
</dbReference>
<dbReference type="RefSeq" id="WP_012695944.1">
    <property type="nucleotide sequence ID" value="NC_012559.1"/>
</dbReference>
<dbReference type="SMR" id="C1DC35"/>
<dbReference type="STRING" id="557598.LHK_00457"/>
<dbReference type="GeneID" id="75109375"/>
<dbReference type="KEGG" id="lhk:LHK_00457"/>
<dbReference type="eggNOG" id="COG1758">
    <property type="taxonomic scope" value="Bacteria"/>
</dbReference>
<dbReference type="HOGENOM" id="CLU_125406_5_1_4"/>
<dbReference type="Proteomes" id="UP000002010">
    <property type="component" value="Chromosome"/>
</dbReference>
<dbReference type="GO" id="GO:0000428">
    <property type="term" value="C:DNA-directed RNA polymerase complex"/>
    <property type="evidence" value="ECO:0007669"/>
    <property type="project" value="UniProtKB-KW"/>
</dbReference>
<dbReference type="GO" id="GO:0003677">
    <property type="term" value="F:DNA binding"/>
    <property type="evidence" value="ECO:0007669"/>
    <property type="project" value="UniProtKB-UniRule"/>
</dbReference>
<dbReference type="GO" id="GO:0003899">
    <property type="term" value="F:DNA-directed RNA polymerase activity"/>
    <property type="evidence" value="ECO:0007669"/>
    <property type="project" value="UniProtKB-UniRule"/>
</dbReference>
<dbReference type="GO" id="GO:0006351">
    <property type="term" value="P:DNA-templated transcription"/>
    <property type="evidence" value="ECO:0007669"/>
    <property type="project" value="UniProtKB-UniRule"/>
</dbReference>
<dbReference type="Gene3D" id="3.90.940.10">
    <property type="match status" value="1"/>
</dbReference>
<dbReference type="HAMAP" id="MF_00366">
    <property type="entry name" value="RNApol_bact_RpoZ"/>
    <property type="match status" value="1"/>
</dbReference>
<dbReference type="InterPro" id="IPR003716">
    <property type="entry name" value="DNA-dir_RNA_pol_omega"/>
</dbReference>
<dbReference type="InterPro" id="IPR006110">
    <property type="entry name" value="Pol_omega/Rpo6/RPB6"/>
</dbReference>
<dbReference type="InterPro" id="IPR036161">
    <property type="entry name" value="RPB6/omega-like_sf"/>
</dbReference>
<dbReference type="NCBIfam" id="TIGR00690">
    <property type="entry name" value="rpoZ"/>
    <property type="match status" value="1"/>
</dbReference>
<dbReference type="PANTHER" id="PTHR34476">
    <property type="entry name" value="DNA-DIRECTED RNA POLYMERASE SUBUNIT OMEGA"/>
    <property type="match status" value="1"/>
</dbReference>
<dbReference type="PANTHER" id="PTHR34476:SF1">
    <property type="entry name" value="DNA-DIRECTED RNA POLYMERASE SUBUNIT OMEGA"/>
    <property type="match status" value="1"/>
</dbReference>
<dbReference type="Pfam" id="PF01192">
    <property type="entry name" value="RNA_pol_Rpb6"/>
    <property type="match status" value="1"/>
</dbReference>
<dbReference type="SMART" id="SM01409">
    <property type="entry name" value="RNA_pol_Rpb6"/>
    <property type="match status" value="1"/>
</dbReference>
<dbReference type="SUPFAM" id="SSF63562">
    <property type="entry name" value="RPB6/omega subunit-like"/>
    <property type="match status" value="1"/>
</dbReference>